<name>RSMA_METAC</name>
<feature type="chain" id="PRO_0000101655" description="Probable ribosomal RNA small subunit methyltransferase A">
    <location>
        <begin position="1"/>
        <end position="269"/>
    </location>
</feature>
<feature type="binding site" evidence="1">
    <location>
        <position position="19"/>
    </location>
    <ligand>
        <name>S-adenosyl-L-methionine</name>
        <dbReference type="ChEBI" id="CHEBI:59789"/>
    </ligand>
</feature>
<feature type="binding site" evidence="1">
    <location>
        <position position="21"/>
    </location>
    <ligand>
        <name>S-adenosyl-L-methionine</name>
        <dbReference type="ChEBI" id="CHEBI:59789"/>
    </ligand>
</feature>
<feature type="binding site" evidence="1">
    <location>
        <position position="46"/>
    </location>
    <ligand>
        <name>S-adenosyl-L-methionine</name>
        <dbReference type="ChEBI" id="CHEBI:59789"/>
    </ligand>
</feature>
<feature type="binding site" evidence="1">
    <location>
        <position position="67"/>
    </location>
    <ligand>
        <name>S-adenosyl-L-methionine</name>
        <dbReference type="ChEBI" id="CHEBI:59789"/>
    </ligand>
</feature>
<feature type="binding site" evidence="1">
    <location>
        <position position="92"/>
    </location>
    <ligand>
        <name>S-adenosyl-L-methionine</name>
        <dbReference type="ChEBI" id="CHEBI:59789"/>
    </ligand>
</feature>
<feature type="binding site" evidence="1">
    <location>
        <position position="107"/>
    </location>
    <ligand>
        <name>S-adenosyl-L-methionine</name>
        <dbReference type="ChEBI" id="CHEBI:59789"/>
    </ligand>
</feature>
<proteinExistence type="inferred from homology"/>
<gene>
    <name evidence="1" type="primary">rsmA</name>
    <name evidence="1" type="synonym">ksgA</name>
    <name type="ordered locus">MA_1441</name>
</gene>
<protein>
    <recommendedName>
        <fullName evidence="1">Probable ribosomal RNA small subunit methyltransferase A</fullName>
        <ecNumber evidence="1">2.1.1.-</ecNumber>
    </recommendedName>
    <alternativeName>
        <fullName evidence="1">16S rRNA dimethyladenosine transferase</fullName>
    </alternativeName>
    <alternativeName>
        <fullName evidence="1">16S rRNA dimethylase</fullName>
    </alternativeName>
    <alternativeName>
        <fullName evidence="1">S-adenosylmethionine-6-N',N'-adenosyl(rRNA) dimethyltransferase</fullName>
    </alternativeName>
</protein>
<keyword id="KW-0963">Cytoplasm</keyword>
<keyword id="KW-0489">Methyltransferase</keyword>
<keyword id="KW-1185">Reference proteome</keyword>
<keyword id="KW-0694">RNA-binding</keyword>
<keyword id="KW-0698">rRNA processing</keyword>
<keyword id="KW-0949">S-adenosyl-L-methionine</keyword>
<keyword id="KW-0808">Transferase</keyword>
<comment type="function">
    <text evidence="1">Specifically dimethylates two adjacent adenosines in the loop of a conserved hairpin near the 3'-end of 16S rRNA in the 30S particle. May play a critical role in biogenesis of 30S subunits.</text>
</comment>
<comment type="subcellular location">
    <subcellularLocation>
        <location evidence="1">Cytoplasm</location>
    </subcellularLocation>
</comment>
<comment type="similarity">
    <text evidence="1">Belongs to the class I-like SAM-binding methyltransferase superfamily. rRNA adenine N(6)-methyltransferase family. RsmA subfamily.</text>
</comment>
<sequence length="269" mass="30451">MVRSILNKYNIKGGTFDQHFLIDIGYLDRIVVAAELSPQDTILEIGAGIGNLTERLARRAKKVIAVELDPALVSVLHDRFDKVENIEVIAGDALKVDFPEFDKVVSNLPYSISSEITFKLLRYKFKLGILMYQYEFAARMVSPPGRKDYSRLTVDTYYFADASILMKVPKGAFQPAPEVDSAVVKLVPRPSPFEVRDEAFFLEFVAAVFSQRRKKLRNSILNTNSMLKIPDIKEVVNQLPDDFVNKRAENLTPEELASVANMLFDLKSR</sequence>
<reference key="1">
    <citation type="journal article" date="2002" name="Genome Res.">
        <title>The genome of Methanosarcina acetivorans reveals extensive metabolic and physiological diversity.</title>
        <authorList>
            <person name="Galagan J.E."/>
            <person name="Nusbaum C."/>
            <person name="Roy A."/>
            <person name="Endrizzi M.G."/>
            <person name="Macdonald P."/>
            <person name="FitzHugh W."/>
            <person name="Calvo S."/>
            <person name="Engels R."/>
            <person name="Smirnov S."/>
            <person name="Atnoor D."/>
            <person name="Brown A."/>
            <person name="Allen N."/>
            <person name="Naylor J."/>
            <person name="Stange-Thomann N."/>
            <person name="DeArellano K."/>
            <person name="Johnson R."/>
            <person name="Linton L."/>
            <person name="McEwan P."/>
            <person name="McKernan K."/>
            <person name="Talamas J."/>
            <person name="Tirrell A."/>
            <person name="Ye W."/>
            <person name="Zimmer A."/>
            <person name="Barber R.D."/>
            <person name="Cann I."/>
            <person name="Graham D.E."/>
            <person name="Grahame D.A."/>
            <person name="Guss A.M."/>
            <person name="Hedderich R."/>
            <person name="Ingram-Smith C."/>
            <person name="Kuettner H.C."/>
            <person name="Krzycki J.A."/>
            <person name="Leigh J.A."/>
            <person name="Li W."/>
            <person name="Liu J."/>
            <person name="Mukhopadhyay B."/>
            <person name="Reeve J.N."/>
            <person name="Smith K."/>
            <person name="Springer T.A."/>
            <person name="Umayam L.A."/>
            <person name="White O."/>
            <person name="White R.H."/>
            <person name="de Macario E.C."/>
            <person name="Ferry J.G."/>
            <person name="Jarrell K.F."/>
            <person name="Jing H."/>
            <person name="Macario A.J.L."/>
            <person name="Paulsen I.T."/>
            <person name="Pritchett M."/>
            <person name="Sowers K.R."/>
            <person name="Swanson R.V."/>
            <person name="Zinder S.H."/>
            <person name="Lander E."/>
            <person name="Metcalf W.W."/>
            <person name="Birren B."/>
        </authorList>
    </citation>
    <scope>NUCLEOTIDE SEQUENCE [LARGE SCALE GENOMIC DNA]</scope>
    <source>
        <strain>ATCC 35395 / DSM 2834 / JCM 12185 / C2A</strain>
    </source>
</reference>
<accession>Q8TQU8</accession>
<organism>
    <name type="scientific">Methanosarcina acetivorans (strain ATCC 35395 / DSM 2834 / JCM 12185 / C2A)</name>
    <dbReference type="NCBI Taxonomy" id="188937"/>
    <lineage>
        <taxon>Archaea</taxon>
        <taxon>Methanobacteriati</taxon>
        <taxon>Methanobacteriota</taxon>
        <taxon>Stenosarchaea group</taxon>
        <taxon>Methanomicrobia</taxon>
        <taxon>Methanosarcinales</taxon>
        <taxon>Methanosarcinaceae</taxon>
        <taxon>Methanosarcina</taxon>
    </lineage>
</organism>
<dbReference type="EC" id="2.1.1.-" evidence="1"/>
<dbReference type="EMBL" id="AE010299">
    <property type="protein sequence ID" value="AAM04855.1"/>
    <property type="molecule type" value="Genomic_DNA"/>
</dbReference>
<dbReference type="RefSeq" id="WP_011021455.1">
    <property type="nucleotide sequence ID" value="NC_003552.1"/>
</dbReference>
<dbReference type="SMR" id="Q8TQU8"/>
<dbReference type="FunCoup" id="Q8TQU8">
    <property type="interactions" value="94"/>
</dbReference>
<dbReference type="STRING" id="188937.MA_1441"/>
<dbReference type="EnsemblBacteria" id="AAM04855">
    <property type="protein sequence ID" value="AAM04855"/>
    <property type="gene ID" value="MA_1441"/>
</dbReference>
<dbReference type="GeneID" id="1473329"/>
<dbReference type="KEGG" id="mac:MA_1441"/>
<dbReference type="HOGENOM" id="CLU_041220_0_2_2"/>
<dbReference type="InParanoid" id="Q8TQU8"/>
<dbReference type="OrthoDB" id="9883at2157"/>
<dbReference type="PhylomeDB" id="Q8TQU8"/>
<dbReference type="Proteomes" id="UP000002487">
    <property type="component" value="Chromosome"/>
</dbReference>
<dbReference type="GO" id="GO:0005737">
    <property type="term" value="C:cytoplasm"/>
    <property type="evidence" value="ECO:0007669"/>
    <property type="project" value="UniProtKB-SubCell"/>
</dbReference>
<dbReference type="GO" id="GO:0003723">
    <property type="term" value="F:RNA binding"/>
    <property type="evidence" value="ECO:0007669"/>
    <property type="project" value="UniProtKB-KW"/>
</dbReference>
<dbReference type="GO" id="GO:0000179">
    <property type="term" value="F:rRNA (adenine-N6,N6-)-dimethyltransferase activity"/>
    <property type="evidence" value="ECO:0000318"/>
    <property type="project" value="GO_Central"/>
</dbReference>
<dbReference type="GO" id="GO:0031167">
    <property type="term" value="P:rRNA methylation"/>
    <property type="evidence" value="ECO:0000318"/>
    <property type="project" value="GO_Central"/>
</dbReference>
<dbReference type="CDD" id="cd02440">
    <property type="entry name" value="AdoMet_MTases"/>
    <property type="match status" value="1"/>
</dbReference>
<dbReference type="FunFam" id="3.40.50.150:FF:000023">
    <property type="entry name" value="Ribosomal RNA small subunit methyltransferase A"/>
    <property type="match status" value="1"/>
</dbReference>
<dbReference type="Gene3D" id="1.10.8.100">
    <property type="entry name" value="Ribosomal RNA adenine dimethylase-like, domain 2"/>
    <property type="match status" value="1"/>
</dbReference>
<dbReference type="Gene3D" id="3.40.50.150">
    <property type="entry name" value="Vaccinia Virus protein VP39"/>
    <property type="match status" value="1"/>
</dbReference>
<dbReference type="HAMAP" id="MF_00607">
    <property type="entry name" value="16SrRNA_methyltr_A"/>
    <property type="match status" value="1"/>
</dbReference>
<dbReference type="InterPro" id="IPR001737">
    <property type="entry name" value="KsgA/Erm"/>
</dbReference>
<dbReference type="InterPro" id="IPR023165">
    <property type="entry name" value="rRNA_Ade_diMease-like_C"/>
</dbReference>
<dbReference type="InterPro" id="IPR020596">
    <property type="entry name" value="rRNA_Ade_Mease_Trfase_CS"/>
</dbReference>
<dbReference type="InterPro" id="IPR020598">
    <property type="entry name" value="rRNA_Ade_methylase_Trfase_N"/>
</dbReference>
<dbReference type="InterPro" id="IPR011530">
    <property type="entry name" value="rRNA_adenine_dimethylase"/>
</dbReference>
<dbReference type="InterPro" id="IPR029063">
    <property type="entry name" value="SAM-dependent_MTases_sf"/>
</dbReference>
<dbReference type="NCBIfam" id="TIGR00755">
    <property type="entry name" value="ksgA"/>
    <property type="match status" value="1"/>
</dbReference>
<dbReference type="PANTHER" id="PTHR11727">
    <property type="entry name" value="DIMETHYLADENOSINE TRANSFERASE"/>
    <property type="match status" value="1"/>
</dbReference>
<dbReference type="PANTHER" id="PTHR11727:SF7">
    <property type="entry name" value="DIMETHYLADENOSINE TRANSFERASE-RELATED"/>
    <property type="match status" value="1"/>
</dbReference>
<dbReference type="Pfam" id="PF00398">
    <property type="entry name" value="RrnaAD"/>
    <property type="match status" value="1"/>
</dbReference>
<dbReference type="SMART" id="SM00650">
    <property type="entry name" value="rADc"/>
    <property type="match status" value="1"/>
</dbReference>
<dbReference type="SUPFAM" id="SSF53335">
    <property type="entry name" value="S-adenosyl-L-methionine-dependent methyltransferases"/>
    <property type="match status" value="1"/>
</dbReference>
<dbReference type="PROSITE" id="PS01131">
    <property type="entry name" value="RRNA_A_DIMETH"/>
    <property type="match status" value="1"/>
</dbReference>
<dbReference type="PROSITE" id="PS51689">
    <property type="entry name" value="SAM_RNA_A_N6_MT"/>
    <property type="match status" value="1"/>
</dbReference>
<evidence type="ECO:0000255" key="1">
    <source>
        <dbReference type="HAMAP-Rule" id="MF_00607"/>
    </source>
</evidence>